<keyword id="KW-0050">Antiport</keyword>
<keyword id="KW-1003">Cell membrane</keyword>
<keyword id="KW-0967">Endosome</keyword>
<keyword id="KW-0406">Ion transport</keyword>
<keyword id="KW-0472">Membrane</keyword>
<keyword id="KW-0597">Phosphoprotein</keyword>
<keyword id="KW-1185">Reference proteome</keyword>
<keyword id="KW-0732">Signal</keyword>
<keyword id="KW-0915">Sodium</keyword>
<keyword id="KW-0739">Sodium transport</keyword>
<keyword id="KW-0812">Transmembrane</keyword>
<keyword id="KW-1133">Transmembrane helix</keyword>
<keyword id="KW-0813">Transport</keyword>
<feature type="signal peptide" evidence="5">
    <location>
        <begin position="1"/>
        <end position="28"/>
    </location>
</feature>
<feature type="chain" id="PRO_0000052358" description="Sodium/hydrogen exchanger 3">
    <location>
        <begin position="29"/>
        <end position="831"/>
    </location>
</feature>
<feature type="topological domain" description="Extracellular" evidence="14">
    <location>
        <begin position="29"/>
        <end position="48"/>
    </location>
</feature>
<feature type="transmembrane region" description="Helical; Name=1" evidence="3">
    <location>
        <begin position="49"/>
        <end position="71"/>
    </location>
</feature>
<feature type="topological domain" description="Cytoplasmic" evidence="14">
    <location>
        <begin position="72"/>
        <end position="79"/>
    </location>
</feature>
<feature type="transmembrane region" description="Helical; Name=2" evidence="3">
    <location>
        <begin position="80"/>
        <end position="99"/>
    </location>
</feature>
<feature type="topological domain" description="Extracellular" evidence="14">
    <location>
        <begin position="100"/>
        <end position="108"/>
    </location>
</feature>
<feature type="transmembrane region" description="Helical; Name=3" evidence="3">
    <location>
        <begin position="109"/>
        <end position="126"/>
    </location>
</feature>
<feature type="topological domain" description="Cytoplasmic" evidence="14">
    <location>
        <begin position="127"/>
        <end position="129"/>
    </location>
</feature>
<feature type="transmembrane region" description="Helical; Name=4" evidence="3">
    <location>
        <begin position="130"/>
        <end position="165"/>
    </location>
</feature>
<feature type="topological domain" description="Extracellular" evidence="14">
    <location>
        <begin position="166"/>
        <end position="178"/>
    </location>
</feature>
<feature type="transmembrane region" description="Helical; Name=5" evidence="3">
    <location>
        <begin position="179"/>
        <end position="200"/>
    </location>
</feature>
<feature type="topological domain" description="Cytoplasmic" evidence="14">
    <location>
        <begin position="201"/>
        <end position="202"/>
    </location>
</feature>
<feature type="transmembrane region" description="Helical; Name=6" evidence="3">
    <location>
        <begin position="203"/>
        <end position="234"/>
    </location>
</feature>
<feature type="topological domain" description="Extracellular" evidence="14">
    <location>
        <begin position="235"/>
        <end position="241"/>
    </location>
</feature>
<feature type="transmembrane region" description="Helical; Name=7" evidence="3">
    <location>
        <begin position="242"/>
        <end position="276"/>
    </location>
</feature>
<feature type="topological domain" description="Cytoplasmic" evidence="14">
    <location>
        <begin position="277"/>
        <end position="278"/>
    </location>
</feature>
<feature type="transmembrane region" description="Helical; Name=8" evidence="3">
    <location>
        <begin position="279"/>
        <end position="301"/>
    </location>
</feature>
<feature type="topological domain" description="Extracellular" evidence="14">
    <location>
        <begin position="302"/>
        <end position="303"/>
    </location>
</feature>
<feature type="transmembrane region" description="Helical; Name=9" evidence="3">
    <location>
        <begin position="304"/>
        <end position="320"/>
    </location>
</feature>
<feature type="topological domain" description="Cytoplasmic" evidence="14">
    <location>
        <begin position="321"/>
        <end position="327"/>
    </location>
</feature>
<feature type="transmembrane region" description="Helical; Name=10" evidence="3">
    <location>
        <begin position="328"/>
        <end position="356"/>
    </location>
</feature>
<feature type="topological domain" description="Extracellular" evidence="14">
    <location>
        <begin position="357"/>
        <end position="364"/>
    </location>
</feature>
<feature type="transmembrane region" description="Helical; Name=11" evidence="3">
    <location>
        <begin position="365"/>
        <end position="386"/>
    </location>
</feature>
<feature type="topological domain" description="Cytoplasmic" evidence="14">
    <location>
        <begin position="387"/>
        <end position="399"/>
    </location>
</feature>
<feature type="transmembrane region" description="Helical; Name=12" evidence="3">
    <location>
        <begin position="400"/>
        <end position="423"/>
    </location>
</feature>
<feature type="topological domain" description="Extracellular" evidence="14">
    <location>
        <begin position="424"/>
        <end position="430"/>
    </location>
</feature>
<feature type="transmembrane region" description="Helical; Name=13" evidence="3">
    <location>
        <begin position="431"/>
        <end position="464"/>
    </location>
</feature>
<feature type="topological domain" description="Cytoplasmic" evidence="14">
    <location>
        <begin position="465"/>
        <end position="831"/>
    </location>
</feature>
<feature type="region of interest" description="Interaction with EZR" evidence="2">
    <location>
        <begin position="573"/>
        <end position="587"/>
    </location>
</feature>
<feature type="region of interest" description="Interaction with NHERF4" evidence="2">
    <location>
        <begin position="588"/>
        <end position="665"/>
    </location>
</feature>
<feature type="region of interest" description="Interaction with AHCYL1" evidence="2">
    <location>
        <begin position="589"/>
        <end position="693"/>
    </location>
</feature>
<feature type="region of interest" description="Disordered" evidence="6">
    <location>
        <begin position="808"/>
        <end position="831"/>
    </location>
</feature>
<feature type="compositionally biased region" description="Polar residues" evidence="6">
    <location>
        <begin position="822"/>
        <end position="831"/>
    </location>
</feature>
<feature type="binding site" evidence="3">
    <location>
        <position position="135"/>
    </location>
    <ligand>
        <name>a 1,2-diacyl-sn-glycero-3-phospho-(1D-myo-inositol)</name>
        <dbReference type="ChEBI" id="CHEBI:57880"/>
    </ligand>
</feature>
<feature type="binding site" evidence="3">
    <location>
        <position position="138"/>
    </location>
    <ligand>
        <name>a 1,2-diacyl-sn-glycero-3-phospho-(1D-myo-inositol)</name>
        <dbReference type="ChEBI" id="CHEBI:57880"/>
    </ligand>
</feature>
<feature type="binding site" evidence="3">
    <location>
        <position position="139"/>
    </location>
    <ligand>
        <name>a 1,2-diacyl-sn-glycero-3-phospho-(1D-myo-inositol)</name>
        <dbReference type="ChEBI" id="CHEBI:57880"/>
    </ligand>
</feature>
<feature type="binding site" evidence="3">
    <location>
        <position position="395"/>
    </location>
    <ligand>
        <name>a 1,2-diacyl-sn-glycero-3-phospho-(1D-myo-inositol)</name>
        <dbReference type="ChEBI" id="CHEBI:57880"/>
    </ligand>
</feature>
<feature type="binding site" evidence="3">
    <location>
        <position position="494"/>
    </location>
    <ligand>
        <name>a 1,2-diacyl-sn-glycero-3-phospho-(1D-myo-inositol)</name>
        <dbReference type="ChEBI" id="CHEBI:57880"/>
    </ligand>
</feature>
<feature type="binding site" evidence="3">
    <location>
        <position position="495"/>
    </location>
    <ligand>
        <name>a 1,2-diacyl-sn-glycero-3-phospho-(1D-myo-inositol)</name>
        <dbReference type="ChEBI" id="CHEBI:57880"/>
    </ligand>
</feature>
<feature type="binding site" evidence="3">
    <location>
        <position position="497"/>
    </location>
    <ligand>
        <name>a 1,2-diacyl-sn-glycero-3-phospho-(1D-myo-inositol)</name>
        <dbReference type="ChEBI" id="CHEBI:57880"/>
    </ligand>
</feature>
<feature type="modified residue" description="Phosphoserine" evidence="13 15">
    <location>
        <position position="552"/>
    </location>
</feature>
<feature type="modified residue" description="Phosphoserine" evidence="15">
    <location>
        <position position="560"/>
    </location>
</feature>
<feature type="modified residue" description="Phosphoserine" evidence="1">
    <location>
        <position position="590"/>
    </location>
</feature>
<feature type="modified residue" description="Phosphoserine" evidence="13">
    <location>
        <position position="605"/>
    </location>
</feature>
<feature type="modified residue" description="Phosphoserine; by SGK1" evidence="2">
    <location>
        <position position="661"/>
    </location>
</feature>
<feature type="modified residue" description="Phosphoserine" evidence="2">
    <location>
        <position position="716"/>
    </location>
</feature>
<feature type="modified residue" description="Phosphoserine" evidence="15">
    <location>
        <position position="807"/>
    </location>
</feature>
<feature type="modified residue" description="Phosphoserine" evidence="1">
    <location>
        <position position="810"/>
    </location>
</feature>
<feature type="sequence conflict" description="In Ref. 1; AAA41702." evidence="14" ref="1">
    <original>LAL</original>
    <variation>VAV</variation>
    <location>
        <begin position="18"/>
        <end position="20"/>
    </location>
</feature>
<name>SL9A3_RAT</name>
<accession>P26433</accession>
<reference key="1">
    <citation type="journal article" date="1992" name="J. Biol. Chem.">
        <title>Molecular cloning of putative members of the Na/H exchanger gene family. cDNA cloning, deduced amino acid sequence, and mRNA tissue expression of the rat Na/H exchanger NHE-1 and two structurally related proteins.</title>
        <authorList>
            <person name="Orlowski J."/>
            <person name="Kandasamy R.A."/>
            <person name="Shull G.E."/>
        </authorList>
    </citation>
    <scope>NUCLEOTIDE SEQUENCE [MRNA]</scope>
    <scope>TISSUE SPECIFICITY</scope>
    <source>
        <strain>Sprague-Dawley</strain>
        <tissue>Kidney</tissue>
    </source>
</reference>
<reference key="2">
    <citation type="journal article" date="2004" name="Nature">
        <title>Genome sequence of the Brown Norway rat yields insights into mammalian evolution.</title>
        <authorList>
            <person name="Gibbs R.A."/>
            <person name="Weinstock G.M."/>
            <person name="Metzker M.L."/>
            <person name="Muzny D.M."/>
            <person name="Sodergren E.J."/>
            <person name="Scherer S."/>
            <person name="Scott G."/>
            <person name="Steffen D."/>
            <person name="Worley K.C."/>
            <person name="Burch P.E."/>
            <person name="Okwuonu G."/>
            <person name="Hines S."/>
            <person name="Lewis L."/>
            <person name="Deramo C."/>
            <person name="Delgado O."/>
            <person name="Dugan-Rocha S."/>
            <person name="Miner G."/>
            <person name="Morgan M."/>
            <person name="Hawes A."/>
            <person name="Gill R."/>
            <person name="Holt R.A."/>
            <person name="Adams M.D."/>
            <person name="Amanatides P.G."/>
            <person name="Baden-Tillson H."/>
            <person name="Barnstead M."/>
            <person name="Chin S."/>
            <person name="Evans C.A."/>
            <person name="Ferriera S."/>
            <person name="Fosler C."/>
            <person name="Glodek A."/>
            <person name="Gu Z."/>
            <person name="Jennings D."/>
            <person name="Kraft C.L."/>
            <person name="Nguyen T."/>
            <person name="Pfannkoch C.M."/>
            <person name="Sitter C."/>
            <person name="Sutton G.G."/>
            <person name="Venter J.C."/>
            <person name="Woodage T."/>
            <person name="Smith D."/>
            <person name="Lee H.-M."/>
            <person name="Gustafson E."/>
            <person name="Cahill P."/>
            <person name="Kana A."/>
            <person name="Doucette-Stamm L."/>
            <person name="Weinstock K."/>
            <person name="Fechtel K."/>
            <person name="Weiss R.B."/>
            <person name="Dunn D.M."/>
            <person name="Green E.D."/>
            <person name="Blakesley R.W."/>
            <person name="Bouffard G.G."/>
            <person name="De Jong P.J."/>
            <person name="Osoegawa K."/>
            <person name="Zhu B."/>
            <person name="Marra M."/>
            <person name="Schein J."/>
            <person name="Bosdet I."/>
            <person name="Fjell C."/>
            <person name="Jones S."/>
            <person name="Krzywinski M."/>
            <person name="Mathewson C."/>
            <person name="Siddiqui A."/>
            <person name="Wye N."/>
            <person name="McPherson J."/>
            <person name="Zhao S."/>
            <person name="Fraser C.M."/>
            <person name="Shetty J."/>
            <person name="Shatsman S."/>
            <person name="Geer K."/>
            <person name="Chen Y."/>
            <person name="Abramzon S."/>
            <person name="Nierman W.C."/>
            <person name="Havlak P.H."/>
            <person name="Chen R."/>
            <person name="Durbin K.J."/>
            <person name="Egan A."/>
            <person name="Ren Y."/>
            <person name="Song X.-Z."/>
            <person name="Li B."/>
            <person name="Liu Y."/>
            <person name="Qin X."/>
            <person name="Cawley S."/>
            <person name="Cooney A.J."/>
            <person name="D'Souza L.M."/>
            <person name="Martin K."/>
            <person name="Wu J.Q."/>
            <person name="Gonzalez-Garay M.L."/>
            <person name="Jackson A.R."/>
            <person name="Kalafus K.J."/>
            <person name="McLeod M.P."/>
            <person name="Milosavljevic A."/>
            <person name="Virk D."/>
            <person name="Volkov A."/>
            <person name="Wheeler D.A."/>
            <person name="Zhang Z."/>
            <person name="Bailey J.A."/>
            <person name="Eichler E.E."/>
            <person name="Tuzun E."/>
            <person name="Birney E."/>
            <person name="Mongin E."/>
            <person name="Ureta-Vidal A."/>
            <person name="Woodwark C."/>
            <person name="Zdobnov E."/>
            <person name="Bork P."/>
            <person name="Suyama M."/>
            <person name="Torrents D."/>
            <person name="Alexandersson M."/>
            <person name="Trask B.J."/>
            <person name="Young J.M."/>
            <person name="Huang H."/>
            <person name="Wang H."/>
            <person name="Xing H."/>
            <person name="Daniels S."/>
            <person name="Gietzen D."/>
            <person name="Schmidt J."/>
            <person name="Stevens K."/>
            <person name="Vitt U."/>
            <person name="Wingrove J."/>
            <person name="Camara F."/>
            <person name="Mar Alba M."/>
            <person name="Abril J.F."/>
            <person name="Guigo R."/>
            <person name="Smit A."/>
            <person name="Dubchak I."/>
            <person name="Rubin E.M."/>
            <person name="Couronne O."/>
            <person name="Poliakov A."/>
            <person name="Huebner N."/>
            <person name="Ganten D."/>
            <person name="Goesele C."/>
            <person name="Hummel O."/>
            <person name="Kreitler T."/>
            <person name="Lee Y.-A."/>
            <person name="Monti J."/>
            <person name="Schulz H."/>
            <person name="Zimdahl H."/>
            <person name="Himmelbauer H."/>
            <person name="Lehrach H."/>
            <person name="Jacob H.J."/>
            <person name="Bromberg S."/>
            <person name="Gullings-Handley J."/>
            <person name="Jensen-Seaman M.I."/>
            <person name="Kwitek A.E."/>
            <person name="Lazar J."/>
            <person name="Pasko D."/>
            <person name="Tonellato P.J."/>
            <person name="Twigger S."/>
            <person name="Ponting C.P."/>
            <person name="Duarte J.M."/>
            <person name="Rice S."/>
            <person name="Goodstadt L."/>
            <person name="Beatson S.A."/>
            <person name="Emes R.D."/>
            <person name="Winter E.E."/>
            <person name="Webber C."/>
            <person name="Brandt P."/>
            <person name="Nyakatura G."/>
            <person name="Adetobi M."/>
            <person name="Chiaromonte F."/>
            <person name="Elnitski L."/>
            <person name="Eswara P."/>
            <person name="Hardison R.C."/>
            <person name="Hou M."/>
            <person name="Kolbe D."/>
            <person name="Makova K."/>
            <person name="Miller W."/>
            <person name="Nekrutenko A."/>
            <person name="Riemer C."/>
            <person name="Schwartz S."/>
            <person name="Taylor J."/>
            <person name="Yang S."/>
            <person name="Zhang Y."/>
            <person name="Lindpaintner K."/>
            <person name="Andrews T.D."/>
            <person name="Caccamo M."/>
            <person name="Clamp M."/>
            <person name="Clarke L."/>
            <person name="Curwen V."/>
            <person name="Durbin R.M."/>
            <person name="Eyras E."/>
            <person name="Searle S.M."/>
            <person name="Cooper G.M."/>
            <person name="Batzoglou S."/>
            <person name="Brudno M."/>
            <person name="Sidow A."/>
            <person name="Stone E.A."/>
            <person name="Payseur B.A."/>
            <person name="Bourque G."/>
            <person name="Lopez-Otin C."/>
            <person name="Puente X.S."/>
            <person name="Chakrabarti K."/>
            <person name="Chatterji S."/>
            <person name="Dewey C."/>
            <person name="Pachter L."/>
            <person name="Bray N."/>
            <person name="Yap V.B."/>
            <person name="Caspi A."/>
            <person name="Tesler G."/>
            <person name="Pevzner P.A."/>
            <person name="Haussler D."/>
            <person name="Roskin K.M."/>
            <person name="Baertsch R."/>
            <person name="Clawson H."/>
            <person name="Furey T.S."/>
            <person name="Hinrichs A.S."/>
            <person name="Karolchik D."/>
            <person name="Kent W.J."/>
            <person name="Rosenbloom K.R."/>
            <person name="Trumbower H."/>
            <person name="Weirauch M."/>
            <person name="Cooper D.N."/>
            <person name="Stenson P.D."/>
            <person name="Ma B."/>
            <person name="Brent M."/>
            <person name="Arumugam M."/>
            <person name="Shteynberg D."/>
            <person name="Copley R.R."/>
            <person name="Taylor M.S."/>
            <person name="Riethman H."/>
            <person name="Mudunuri U."/>
            <person name="Peterson J."/>
            <person name="Guyer M."/>
            <person name="Felsenfeld A."/>
            <person name="Old S."/>
            <person name="Mockrin S."/>
            <person name="Collins F.S."/>
        </authorList>
    </citation>
    <scope>NUCLEOTIDE SEQUENCE [LARGE SCALE GENOMIC DNA]</scope>
    <source>
        <strain>Brown Norway</strain>
    </source>
</reference>
<reference key="3">
    <citation type="journal article" date="1993" name="J. Biol. Chem.">
        <title>Heterologous expression and functional properties of amiloride high affinity (NHE-1) and low affinity (NHE-3) isoforms of the rat Na/H exchanger.</title>
        <authorList>
            <person name="Orlowski J."/>
        </authorList>
    </citation>
    <scope>FUNCTION</scope>
    <scope>TRANSPORTER ACTIVITY</scope>
    <scope>BIOPHYSICOCHEMICAL PROPERTIES</scope>
</reference>
<reference key="4">
    <citation type="journal article" date="1998" name="J. Biol. Chem.">
        <title>The epithelial sodium-hydrogen antiporter Na+/H+ exchanger 3 accumulates and is functional in recycling endosomes.</title>
        <authorList>
            <person name="D'Souza S."/>
            <person name="Garcia-Cabado A."/>
            <person name="Yu F."/>
            <person name="Teter K."/>
            <person name="Lukacs G."/>
            <person name="Skorecki K."/>
            <person name="Moore H.P."/>
            <person name="Orlowski J."/>
            <person name="Grinstein S."/>
        </authorList>
    </citation>
    <scope>FUNCTION</scope>
    <scope>TRANSPORTER ACTIVITY</scope>
    <scope>SUBCELLULAR LOCATION</scope>
</reference>
<reference key="5">
    <citation type="journal article" date="1999" name="J. Biol. Chem.">
        <title>Acute inhibition of Na/H exchanger NHE-3 by cAMP. Role of protein kinase a and NHE-3 phosphoserines 552 and 605.</title>
        <authorList>
            <person name="Zhao H."/>
            <person name="Wiederkehr M.R."/>
            <person name="Fan L."/>
            <person name="Collazo R.L."/>
            <person name="Crowder L.A."/>
            <person name="Moe O.W."/>
        </authorList>
    </citation>
    <scope>FUNCTION</scope>
    <scope>TRANSPORTER ACTIVITY</scope>
    <scope>PHOSPHORYLATION AT SER-552 AND SER-605</scope>
    <scope>ACTIVITY REGULATION</scope>
</reference>
<reference key="6">
    <citation type="journal article" date="2003" name="Biol. Pharm. Bull.">
        <title>Calcineurin homologous protein isoform 2 (CHP2), Na+/H+ exchangers-binding protein, is expressed in intestinal epithelium.</title>
        <authorList>
            <person name="Inoue H."/>
            <person name="Nakamura Y."/>
            <person name="Nagita M."/>
            <person name="Takai T."/>
            <person name="Masuda M."/>
            <person name="Nakamura N."/>
            <person name="Kanazawa H."/>
        </authorList>
    </citation>
    <scope>INTERACTION WITH CHP1 AND CHP2</scope>
</reference>
<reference key="7">
    <citation type="journal article" date="2006" name="J. Biol. Chem.">
        <title>Shank2 associates with and regulates Na+/H+ exchanger 3.</title>
        <authorList>
            <person name="Han W."/>
            <person name="Kim K.H."/>
            <person name="Jo M.J."/>
            <person name="Lee J.H."/>
            <person name="Yang J."/>
            <person name="Doctor R.B."/>
            <person name="Moe O.W."/>
            <person name="Lee J."/>
            <person name="Kim E."/>
            <person name="Lee M.G."/>
        </authorList>
    </citation>
    <scope>INTERACTION WITH SHANK2</scope>
</reference>
<reference key="8">
    <citation type="journal article" date="2010" name="J. Biol. Chem.">
        <title>Activation of Na+/H+ exchanger NHE3 by angiotensin II is mediated by inositol 1,4,5-triphosphate (IP3) receptor-binding protein released with IP3 (IRBIT) and Ca2+/calmodulin-dependent protein kinase II.</title>
        <authorList>
            <person name="He P."/>
            <person name="Klein J."/>
            <person name="Yun C.C."/>
        </authorList>
    </citation>
    <scope>TISSUE SPECIFICITY</scope>
    <scope>INTERACTION WITH AHCYL1</scope>
    <scope>SUBCELLULAR LOCATION</scope>
</reference>
<reference key="9">
    <citation type="journal article" date="2012" name="Nat. Commun.">
        <title>Quantitative maps of protein phosphorylation sites across 14 different rat organs and tissues.</title>
        <authorList>
            <person name="Lundby A."/>
            <person name="Secher A."/>
            <person name="Lage K."/>
            <person name="Nordsborg N.B."/>
            <person name="Dmytriyev A."/>
            <person name="Lundby C."/>
            <person name="Olsen J.V."/>
        </authorList>
    </citation>
    <scope>PHOSPHORYLATION [LARGE SCALE ANALYSIS] AT SER-552; SER-560 AND SER-807</scope>
    <scope>IDENTIFICATION BY MASS SPECTROMETRY [LARGE SCALE ANALYSIS]</scope>
</reference>
<organism>
    <name type="scientific">Rattus norvegicus</name>
    <name type="common">Rat</name>
    <dbReference type="NCBI Taxonomy" id="10116"/>
    <lineage>
        <taxon>Eukaryota</taxon>
        <taxon>Metazoa</taxon>
        <taxon>Chordata</taxon>
        <taxon>Craniata</taxon>
        <taxon>Vertebrata</taxon>
        <taxon>Euteleostomi</taxon>
        <taxon>Mammalia</taxon>
        <taxon>Eutheria</taxon>
        <taxon>Euarchontoglires</taxon>
        <taxon>Glires</taxon>
        <taxon>Rodentia</taxon>
        <taxon>Myomorpha</taxon>
        <taxon>Muroidea</taxon>
        <taxon>Muridae</taxon>
        <taxon>Murinae</taxon>
        <taxon>Rattus</taxon>
    </lineage>
</organism>
<sequence>MWHPALGPGWKPLLALALALTSLRGVRGIEEEPNSGGSFQIVTFKWHHVQDPYIIALWILVASLAKIVFHLSHKVTSVVPESALLIVLGLVLGGIVWAADHIASFTLTPTLFFFYLLPPIVLDAGYFMPNRLFFGNLGTILLYAVIGTIWNAATTGLSLYGVFLSGLMGELKIGLLDFLLFGSLIAAVDPVAVLAVFEEVHVNEVLFIIVFGESLLNDAVTVVLYNVFESFVTLGGDAVTGVDCVKGIVSFFVVSLGGTLVGVIFAFLLSLVTRFTKHVRIIEPGFVFVISYLSYLTSEMLSLSAILAITFCGICCQKYVKANISEQSATTVRYTMKMLASGAETIIFMFLGISAVDPVIWTWNTAFVLLTLVFISVYRAIGVVLQTWILNRYRMVQLETIDQVVMSYGGLRGAVAYALVVLLDEKKVKEKNLFVSTTLIVVFFTVIFQGLTIKPLVQWLKVKRSEQREPKLNEKLHGRAFDHILSAIEDISGQIGHNYLRDKWSNFDRKFLSKVLMRRSAQKSRDRILNVFHELNLKDAISYVAEGERRGSLAFIRSPSTDNMVNVDFSTPRPSTVEASVSYFLRENVSAVCLDMQSLEQRRRSIRDTEDMVTHHTLQQYLYKPRQEYKHLYSRHELTPNEDEKQDKEIFHRTMRKRLESFKSAKLGINQNKKAAKLYKRERAQKRRNSSIPNGKLPMENLAHNFTIKEKDLELSEPEEATNYEEISGGIEFLASVTKDVASDSGAGIDNPVFSPDEDLDPSILSRVPPWLSPGETVVPSQRARVQIPNSPSNFRRLTPFRLSNKSVDSFLQADGPEEQLQPASPESTHM</sequence>
<gene>
    <name type="primary">Slc9a3</name>
    <name type="synonym">Nhe3</name>
</gene>
<evidence type="ECO:0000250" key="1">
    <source>
        <dbReference type="UniProtKB" id="G3X939"/>
    </source>
</evidence>
<evidence type="ECO:0000250" key="2">
    <source>
        <dbReference type="UniProtKB" id="P26432"/>
    </source>
</evidence>
<evidence type="ECO:0000250" key="3">
    <source>
        <dbReference type="UniProtKB" id="P48764"/>
    </source>
</evidence>
<evidence type="ECO:0000250" key="4">
    <source>
        <dbReference type="UniProtKB" id="Q28362"/>
    </source>
</evidence>
<evidence type="ECO:0000255" key="5"/>
<evidence type="ECO:0000256" key="6">
    <source>
        <dbReference type="SAM" id="MobiDB-lite"/>
    </source>
</evidence>
<evidence type="ECO:0000269" key="7">
    <source>
    </source>
</evidence>
<evidence type="ECO:0000269" key="8">
    <source>
    </source>
</evidence>
<evidence type="ECO:0000269" key="9">
    <source>
    </source>
</evidence>
<evidence type="ECO:0000269" key="10">
    <source>
    </source>
</evidence>
<evidence type="ECO:0000269" key="11">
    <source>
    </source>
</evidence>
<evidence type="ECO:0000269" key="12">
    <source>
    </source>
</evidence>
<evidence type="ECO:0000269" key="13">
    <source>
    </source>
</evidence>
<evidence type="ECO:0000305" key="14"/>
<evidence type="ECO:0007744" key="15">
    <source>
    </source>
</evidence>
<comment type="function">
    <text evidence="3 11 12">Plasma membrane Na(+)/H(+) antiporter. Exchanges intracellular H(+) ions for extracellular Na(+) in 1:1 stoichiometry, playing a key role in salt and fluid absorption and pH homeostasis (PubMed:8393860, PubMed:9442041). Major apical Na(+)/H(+) exchanger in kidney and intestine playing an important role in renal and intestine Na(+) absorption and blood pressure regulation (By similarity).</text>
</comment>
<comment type="catalytic activity">
    <reaction evidence="11 12 13">
        <text>Na(+)(in) + H(+)(out) = Na(+)(out) + H(+)(in)</text>
        <dbReference type="Rhea" id="RHEA:29419"/>
        <dbReference type="ChEBI" id="CHEBI:15378"/>
        <dbReference type="ChEBI" id="CHEBI:29101"/>
    </reaction>
</comment>
<comment type="activity regulation">
    <text evidence="2 3">Seems to switch between active and inactive modes in response to various stimuli (By similarity). Activated directly or indirectly by membrane phosphatidylinositol (PIs) (By similarity). Regulated by a variety of auxiliary proteins, which facilitate the maturation, cell surface expression and function of the transporter. Inhibited specifically by the drug tenapanor (By similarity).</text>
</comment>
<comment type="biophysicochemical properties">
    <kinetics>
        <KM evidence="11">4.7 mM for Na(+)</KM>
    </kinetics>
</comment>
<comment type="subunit">
    <text evidence="2 3 4 7 9 10">Homodimer (By similarity). Found in the forms of complex and dynamic macromolecular complexes (By similarity). Binds NHERF1 and NHERF2 (By similarity). Interacts with NHERF4 and interactions decrease in response to elevated calcium ion levels (By similarity). Interacts with PDZK1 (via C-terminal PDZ domain) (By similarity). Interacts with CHP1; this interaction increases trafficking and activity at the plasma membrane of SLC9A3 (By similarity) (PubMed:12576672). Interacts with CHP2 and SHANK2 (PubMed:12576672, PubMed:16293618). Interacts with AHCYL1; the interaction is required for SLC9A3 activity (PubMed:20584908). Interacts with EZR; interaction targets SLC9A3 to the apical membrane (By similarity). Interacts with SNX27 (via PDZ domains); directs SLC9A3 membrane insertion from early endosomes to the plasma membrane (By similarity).</text>
</comment>
<comment type="interaction">
    <interactant intactId="EBI-961694">
        <id>P26433</id>
    </interactant>
    <interactant intactId="EBI-3649585">
        <id>O55043</id>
        <label>Arhgef7</label>
    </interactant>
    <organismsDiffer>false</organismsDiffer>
    <experiments>3</experiments>
</comment>
<comment type="interaction">
    <interactant intactId="EBI-961694">
        <id>P26433</id>
    </interactant>
    <interactant intactId="EBI-6146708">
        <id>Q810D1</id>
        <label>Chp2</label>
    </interactant>
    <organismsDiffer>false</organismsDiffer>
    <experiments>3</experiments>
</comment>
<comment type="interaction">
    <interactant intactId="EBI-961694">
        <id>P26433</id>
    </interactant>
    <interactant intactId="EBI-397902">
        <id>Q9QX74</id>
        <label>Shank2</label>
    </interactant>
    <organismsDiffer>false</organismsDiffer>
    <experiments>5</experiments>
</comment>
<comment type="subcellular location">
    <subcellularLocation>
        <location evidence="10">Apical cell membrane</location>
        <topology evidence="3">Multi-pass membrane protein</topology>
    </subcellularLocation>
    <subcellularLocation>
        <location evidence="3">Cell membrane</location>
        <topology evidence="3">Multi-pass membrane protein</topology>
    </subcellularLocation>
    <subcellularLocation>
        <location evidence="12">Recycling endosome membrane</location>
        <topology evidence="3">Multi-pass membrane protein</topology>
    </subcellularLocation>
    <subcellularLocation>
        <location evidence="3">Early endosome membrane</location>
        <topology evidence="3">Multi-pass membrane protein</topology>
    </subcellularLocation>
    <text evidence="4 12">In intestinal epithelial cells, localizes to the ileal brush border. Angiotensin-2 enhances apical expression (By similarity). Translocates between intracellular compartments and the plasma membrane via a clathrin-mediated pathway (PubMed:9442041).</text>
</comment>
<comment type="tissue specificity">
    <text evidence="8 10">Most abundant in colon and small intestine, followed by kidney and stomach. In kidney, expressed in proximal tubules and outer medulla (at protein level).</text>
</comment>
<comment type="domain">
    <text evidence="7 9 10 13">The C-terminal intracellular domain is subject to extensive post-translational modifications and binding partner interactions which regulate transporter activity, scaffolding functions, downstream events and localization.</text>
</comment>
<comment type="PTM">
    <text evidence="2 13">Phosphorylated by PRKACA at Ser-552 and Ser-605, which inhibits activity (PubMed:9933588). Phosphorylation of Ser-605 is essential for cAMP-mediated inhibition of SLC9A3 (PubMed:9933588). Phosphorylation at Ser-661 by SGK1 is associated with increased abundance at the cell membrane (By similarity). Phosphorylation at Ser-716 by CSNK2A1 regulates SLC9A3 activity through the formation of multiple signaling complexes (By similarity).</text>
</comment>
<comment type="similarity">
    <text evidence="14">Belongs to the monovalent cation:p,roton antiporter 1 (CPA1) transporter (TC 2.A.36) family.</text>
</comment>
<dbReference type="EMBL" id="M85300">
    <property type="protein sequence ID" value="AAA41702.1"/>
    <property type="molecule type" value="mRNA"/>
</dbReference>
<dbReference type="EMBL" id="AC094921">
    <property type="status" value="NOT_ANNOTATED_CDS"/>
    <property type="molecule type" value="Genomic_DNA"/>
</dbReference>
<dbReference type="PIR" id="B40204">
    <property type="entry name" value="B40204"/>
</dbReference>
<dbReference type="RefSeq" id="NP_001400969.1">
    <property type="nucleotide sequence ID" value="NM_001414040.1"/>
</dbReference>
<dbReference type="RefSeq" id="NP_036786.2">
    <property type="nucleotide sequence ID" value="NM_012654.3"/>
</dbReference>
<dbReference type="RefSeq" id="XP_008756899.1">
    <property type="nucleotide sequence ID" value="XM_008758677.2"/>
</dbReference>
<dbReference type="SMR" id="P26433"/>
<dbReference type="BioGRID" id="246908">
    <property type="interactions" value="1"/>
</dbReference>
<dbReference type="FunCoup" id="P26433">
    <property type="interactions" value="305"/>
</dbReference>
<dbReference type="IntAct" id="P26433">
    <property type="interactions" value="7"/>
</dbReference>
<dbReference type="MINT" id="P26433"/>
<dbReference type="STRING" id="10116.ENSRNOP00000020711"/>
<dbReference type="BindingDB" id="P26433"/>
<dbReference type="ChEMBL" id="CHEMBL3879842"/>
<dbReference type="DrugCentral" id="P26433"/>
<dbReference type="GuidetoPHARMACOLOGY" id="950"/>
<dbReference type="TCDB" id="2.A.36.1.2">
    <property type="family name" value="the monovalent cation:proton antiporter-1 (cpa1) family"/>
</dbReference>
<dbReference type="GlyCosmos" id="P26433">
    <property type="glycosylation" value="1 site, No reported glycans"/>
</dbReference>
<dbReference type="iPTMnet" id="P26433"/>
<dbReference type="PhosphoSitePlus" id="P26433"/>
<dbReference type="PaxDb" id="10116-ENSRNOP00000020711"/>
<dbReference type="DNASU" id="24784"/>
<dbReference type="Ensembl" id="ENSRNOT00000020711.4">
    <property type="protein sequence ID" value="ENSRNOP00000020711.2"/>
    <property type="gene ID" value="ENSRNOG00000015159.6"/>
</dbReference>
<dbReference type="Ensembl" id="ENSRNOT00055005073">
    <property type="protein sequence ID" value="ENSRNOP00055003770"/>
    <property type="gene ID" value="ENSRNOG00055003268"/>
</dbReference>
<dbReference type="Ensembl" id="ENSRNOT00060043066">
    <property type="protein sequence ID" value="ENSRNOP00060035640"/>
    <property type="gene ID" value="ENSRNOG00060024855"/>
</dbReference>
<dbReference type="Ensembl" id="ENSRNOT00065032543">
    <property type="protein sequence ID" value="ENSRNOP00065025972"/>
    <property type="gene ID" value="ENSRNOG00065019340"/>
</dbReference>
<dbReference type="GeneID" id="24784"/>
<dbReference type="KEGG" id="rno:24784"/>
<dbReference type="UCSC" id="RGD:3720">
    <property type="organism name" value="rat"/>
</dbReference>
<dbReference type="AGR" id="RGD:3720"/>
<dbReference type="CTD" id="6550"/>
<dbReference type="RGD" id="3720">
    <property type="gene designation" value="Slc9a3"/>
</dbReference>
<dbReference type="eggNOG" id="KOG1966">
    <property type="taxonomic scope" value="Eukaryota"/>
</dbReference>
<dbReference type="GeneTree" id="ENSGT00940000158616"/>
<dbReference type="HOGENOM" id="CLU_005912_4_2_1"/>
<dbReference type="InParanoid" id="P26433"/>
<dbReference type="OMA" id="NPEIWTW"/>
<dbReference type="PhylomeDB" id="P26433"/>
<dbReference type="TreeFam" id="TF317212"/>
<dbReference type="Reactome" id="R-RNO-425986">
    <property type="pathway name" value="Sodium/Proton exchangers"/>
</dbReference>
<dbReference type="PRO" id="PR:P26433"/>
<dbReference type="Proteomes" id="UP000002494">
    <property type="component" value="Chromosome 1"/>
</dbReference>
<dbReference type="GO" id="GO:0016324">
    <property type="term" value="C:apical plasma membrane"/>
    <property type="evidence" value="ECO:0000314"/>
    <property type="project" value="UniProtKB"/>
</dbReference>
<dbReference type="GO" id="GO:0005903">
    <property type="term" value="C:brush border"/>
    <property type="evidence" value="ECO:0000314"/>
    <property type="project" value="RGD"/>
</dbReference>
<dbReference type="GO" id="GO:0031526">
    <property type="term" value="C:brush border membrane"/>
    <property type="evidence" value="ECO:0000314"/>
    <property type="project" value="RGD"/>
</dbReference>
<dbReference type="GO" id="GO:0005769">
    <property type="term" value="C:early endosome"/>
    <property type="evidence" value="ECO:0000266"/>
    <property type="project" value="RGD"/>
</dbReference>
<dbReference type="GO" id="GO:0031901">
    <property type="term" value="C:early endosome membrane"/>
    <property type="evidence" value="ECO:0007669"/>
    <property type="project" value="UniProtKB-SubCell"/>
</dbReference>
<dbReference type="GO" id="GO:0070062">
    <property type="term" value="C:extracellular exosome"/>
    <property type="evidence" value="ECO:0000266"/>
    <property type="project" value="RGD"/>
</dbReference>
<dbReference type="GO" id="GO:0005886">
    <property type="term" value="C:plasma membrane"/>
    <property type="evidence" value="ECO:0000250"/>
    <property type="project" value="UniProtKB"/>
</dbReference>
<dbReference type="GO" id="GO:0055038">
    <property type="term" value="C:recycling endosome membrane"/>
    <property type="evidence" value="ECO:0000314"/>
    <property type="project" value="UniProtKB"/>
</dbReference>
<dbReference type="GO" id="GO:0031982">
    <property type="term" value="C:vesicle"/>
    <property type="evidence" value="ECO:0000266"/>
    <property type="project" value="RGD"/>
</dbReference>
<dbReference type="GO" id="GO:0042802">
    <property type="term" value="F:identical protein binding"/>
    <property type="evidence" value="ECO:0000250"/>
    <property type="project" value="UniProtKB"/>
</dbReference>
<dbReference type="GO" id="GO:0030165">
    <property type="term" value="F:PDZ domain binding"/>
    <property type="evidence" value="ECO:0000250"/>
    <property type="project" value="UniProtKB"/>
</dbReference>
<dbReference type="GO" id="GO:0035091">
    <property type="term" value="F:phosphatidylinositol binding"/>
    <property type="evidence" value="ECO:0000250"/>
    <property type="project" value="UniProtKB"/>
</dbReference>
<dbReference type="GO" id="GO:0015386">
    <property type="term" value="F:potassium:proton antiporter activity"/>
    <property type="evidence" value="ECO:0000318"/>
    <property type="project" value="GO_Central"/>
</dbReference>
<dbReference type="GO" id="GO:0015385">
    <property type="term" value="F:sodium:proton antiporter activity"/>
    <property type="evidence" value="ECO:0000314"/>
    <property type="project" value="RGD"/>
</dbReference>
<dbReference type="GO" id="GO:0007623">
    <property type="term" value="P:circadian rhythm"/>
    <property type="evidence" value="ECO:0000270"/>
    <property type="project" value="RGD"/>
</dbReference>
<dbReference type="GO" id="GO:0071805">
    <property type="term" value="P:potassium ion transmembrane transport"/>
    <property type="evidence" value="ECO:0000318"/>
    <property type="project" value="GO_Central"/>
</dbReference>
<dbReference type="GO" id="GO:0006898">
    <property type="term" value="P:receptor-mediated endocytosis"/>
    <property type="evidence" value="ECO:0000315"/>
    <property type="project" value="RGD"/>
</dbReference>
<dbReference type="GO" id="GO:0051453">
    <property type="term" value="P:regulation of intracellular pH"/>
    <property type="evidence" value="ECO:0000266"/>
    <property type="project" value="RGD"/>
</dbReference>
<dbReference type="GO" id="GO:0006885">
    <property type="term" value="P:regulation of pH"/>
    <property type="evidence" value="ECO:0000314"/>
    <property type="project" value="RGD"/>
</dbReference>
<dbReference type="GO" id="GO:0002028">
    <property type="term" value="P:regulation of sodium ion transport"/>
    <property type="evidence" value="ECO:0000315"/>
    <property type="project" value="RGD"/>
</dbReference>
<dbReference type="GO" id="GO:0051384">
    <property type="term" value="P:response to glucocorticoid"/>
    <property type="evidence" value="ECO:0000270"/>
    <property type="project" value="RGD"/>
</dbReference>
<dbReference type="GO" id="GO:0098719">
    <property type="term" value="P:sodium ion import across plasma membrane"/>
    <property type="evidence" value="ECO:0000250"/>
    <property type="project" value="UniProtKB"/>
</dbReference>
<dbReference type="GO" id="GO:0006814">
    <property type="term" value="P:sodium ion transport"/>
    <property type="evidence" value="ECO:0000314"/>
    <property type="project" value="RGD"/>
</dbReference>
<dbReference type="Gene3D" id="6.10.140.1330">
    <property type="match status" value="1"/>
</dbReference>
<dbReference type="InterPro" id="IPR018422">
    <property type="entry name" value="Cation/H_exchanger_CPA1"/>
</dbReference>
<dbReference type="InterPro" id="IPR006153">
    <property type="entry name" value="Cation/H_exchanger_TM"/>
</dbReference>
<dbReference type="InterPro" id="IPR018410">
    <property type="entry name" value="Na/H_exchanger_3/5"/>
</dbReference>
<dbReference type="InterPro" id="IPR004709">
    <property type="entry name" value="NaH_exchanger"/>
</dbReference>
<dbReference type="NCBIfam" id="TIGR00840">
    <property type="entry name" value="b_cpa1"/>
    <property type="match status" value="1"/>
</dbReference>
<dbReference type="PANTHER" id="PTHR10110">
    <property type="entry name" value="SODIUM/HYDROGEN EXCHANGER"/>
    <property type="match status" value="1"/>
</dbReference>
<dbReference type="PANTHER" id="PTHR10110:SF90">
    <property type="entry name" value="SODIUM_HYDROGEN EXCHANGER 3"/>
    <property type="match status" value="1"/>
</dbReference>
<dbReference type="Pfam" id="PF00999">
    <property type="entry name" value="Na_H_Exchanger"/>
    <property type="match status" value="1"/>
</dbReference>
<dbReference type="PRINTS" id="PR01084">
    <property type="entry name" value="NAHEXCHNGR"/>
</dbReference>
<dbReference type="PRINTS" id="PR01087">
    <property type="entry name" value="NAHEXCHNGR3"/>
</dbReference>
<proteinExistence type="evidence at protein level"/>
<protein>
    <recommendedName>
        <fullName>Sodium/hydrogen exchanger 3</fullName>
    </recommendedName>
    <alternativeName>
        <fullName>Na(+)/H(+) exchanger 3</fullName>
        <shortName>NHE-3</shortName>
    </alternativeName>
    <alternativeName>
        <fullName>Solute carrier family 9 member 3</fullName>
    </alternativeName>
</protein>